<evidence type="ECO:0000250" key="1"/>
<evidence type="ECO:0000255" key="2"/>
<evidence type="ECO:0000305" key="3"/>
<gene>
    <name type="primary">aglD</name>
    <name type="ORF">An14g01800</name>
</gene>
<proteinExistence type="inferred from homology"/>
<reference key="1">
    <citation type="journal article" date="2007" name="Nat. Biotechnol.">
        <title>Genome sequencing and analysis of the versatile cell factory Aspergillus niger CBS 513.88.</title>
        <authorList>
            <person name="Pel H.J."/>
            <person name="de Winde J.H."/>
            <person name="Archer D.B."/>
            <person name="Dyer P.S."/>
            <person name="Hofmann G."/>
            <person name="Schaap P.J."/>
            <person name="Turner G."/>
            <person name="de Vries R.P."/>
            <person name="Albang R."/>
            <person name="Albermann K."/>
            <person name="Andersen M.R."/>
            <person name="Bendtsen J.D."/>
            <person name="Benen J.A.E."/>
            <person name="van den Berg M."/>
            <person name="Breestraat S."/>
            <person name="Caddick M.X."/>
            <person name="Contreras R."/>
            <person name="Cornell M."/>
            <person name="Coutinho P.M."/>
            <person name="Danchin E.G.J."/>
            <person name="Debets A.J.M."/>
            <person name="Dekker P."/>
            <person name="van Dijck P.W.M."/>
            <person name="van Dijk A."/>
            <person name="Dijkhuizen L."/>
            <person name="Driessen A.J.M."/>
            <person name="d'Enfert C."/>
            <person name="Geysens S."/>
            <person name="Goosen C."/>
            <person name="Groot G.S.P."/>
            <person name="de Groot P.W.J."/>
            <person name="Guillemette T."/>
            <person name="Henrissat B."/>
            <person name="Herweijer M."/>
            <person name="van den Hombergh J.P.T.W."/>
            <person name="van den Hondel C.A.M.J.J."/>
            <person name="van der Heijden R.T.J.M."/>
            <person name="van der Kaaij R.M."/>
            <person name="Klis F.M."/>
            <person name="Kools H.J."/>
            <person name="Kubicek C.P."/>
            <person name="van Kuyk P.A."/>
            <person name="Lauber J."/>
            <person name="Lu X."/>
            <person name="van der Maarel M.J.E.C."/>
            <person name="Meulenberg R."/>
            <person name="Menke H."/>
            <person name="Mortimer M.A."/>
            <person name="Nielsen J."/>
            <person name="Oliver S.G."/>
            <person name="Olsthoorn M."/>
            <person name="Pal K."/>
            <person name="van Peij N.N.M.E."/>
            <person name="Ram A.F.J."/>
            <person name="Rinas U."/>
            <person name="Roubos J.A."/>
            <person name="Sagt C.M.J."/>
            <person name="Schmoll M."/>
            <person name="Sun J."/>
            <person name="Ussery D."/>
            <person name="Varga J."/>
            <person name="Vervecken W."/>
            <person name="van de Vondervoort P.J.J."/>
            <person name="Wedler H."/>
            <person name="Woesten H.A.B."/>
            <person name="Zeng A.-P."/>
            <person name="van Ooyen A.J.J."/>
            <person name="Visser J."/>
            <person name="Stam H."/>
        </authorList>
    </citation>
    <scope>NUCLEOTIDE SEQUENCE [LARGE SCALE GENOMIC DNA]</scope>
    <source>
        <strain>ATCC MYA-4892 / CBS 513.88 / FGSC A1513</strain>
    </source>
</reference>
<organism>
    <name type="scientific">Aspergillus niger (strain ATCC MYA-4892 / CBS 513.88 / FGSC A1513)</name>
    <dbReference type="NCBI Taxonomy" id="425011"/>
    <lineage>
        <taxon>Eukaryota</taxon>
        <taxon>Fungi</taxon>
        <taxon>Dikarya</taxon>
        <taxon>Ascomycota</taxon>
        <taxon>Pezizomycotina</taxon>
        <taxon>Eurotiomycetes</taxon>
        <taxon>Eurotiomycetidae</taxon>
        <taxon>Eurotiales</taxon>
        <taxon>Aspergillaceae</taxon>
        <taxon>Aspergillus</taxon>
        <taxon>Aspergillus subgen. Circumdati</taxon>
    </lineage>
</organism>
<feature type="signal peptide" evidence="2">
    <location>
        <begin position="1"/>
        <end position="20"/>
    </location>
</feature>
<feature type="chain" id="PRO_5000220909" description="Probable alpha-galactosidase D">
    <location>
        <begin position="21"/>
        <end position="660"/>
    </location>
</feature>
<feature type="active site" description="Nucleophile" evidence="1">
    <location>
        <position position="155"/>
    </location>
</feature>
<feature type="active site" description="Proton donor" evidence="1">
    <location>
        <position position="222"/>
    </location>
</feature>
<feature type="binding site" evidence="1">
    <location>
        <begin position="200"/>
        <end position="204"/>
    </location>
    <ligand>
        <name>substrate</name>
    </ligand>
</feature>
<feature type="glycosylation site" description="N-linked (GlcNAc...) asparagine" evidence="2">
    <location>
        <position position="47"/>
    </location>
</feature>
<feature type="glycosylation site" description="N-linked (GlcNAc...) asparagine" evidence="2">
    <location>
        <position position="91"/>
    </location>
</feature>
<feature type="glycosylation site" description="N-linked (GlcNAc...) asparagine" evidence="2">
    <location>
        <position position="129"/>
    </location>
</feature>
<feature type="glycosylation site" description="N-linked (GlcNAc...) asparagine" evidence="2">
    <location>
        <position position="182"/>
    </location>
</feature>
<feature type="glycosylation site" description="N-linked (GlcNAc...) asparagine" evidence="2">
    <location>
        <position position="191"/>
    </location>
</feature>
<feature type="glycosylation site" description="N-linked (GlcNAc...) asparagine" evidence="2">
    <location>
        <position position="351"/>
    </location>
</feature>
<feature type="glycosylation site" description="N-linked (GlcNAc...) asparagine" evidence="2">
    <location>
        <position position="403"/>
    </location>
</feature>
<feature type="glycosylation site" description="N-linked (GlcNAc...) asparagine" evidence="2">
    <location>
        <position position="460"/>
    </location>
</feature>
<feature type="glycosylation site" description="N-linked (GlcNAc...) asparagine" evidence="2">
    <location>
        <position position="492"/>
    </location>
</feature>
<feature type="glycosylation site" description="N-linked (GlcNAc...) asparagine" evidence="2">
    <location>
        <position position="506"/>
    </location>
</feature>
<feature type="glycosylation site" description="N-linked (GlcNAc...) asparagine" evidence="2">
    <location>
        <position position="514"/>
    </location>
</feature>
<feature type="glycosylation site" description="N-linked (GlcNAc...) asparagine" evidence="2">
    <location>
        <position position="584"/>
    </location>
</feature>
<feature type="disulfide bond" evidence="1">
    <location>
        <begin position="124"/>
        <end position="157"/>
    </location>
</feature>
<sequence>MLLHFILYAALSSVVTSVSLQPRLQDGLALTPQMGWNTYNHYSCSPNETIVQSNAQALVDLGLSSLGYRYVTTDCGWTVADRLPDGSLTWNDTLFPQGFPAMGDFLHDLGLLFGVYQDSGILLCGSPPNETGSLYHEEQDARTFASWNVDSLKYDNCYSDAATGYPNVNYAPSTSPEPRFANMSHALLQQNRTILFQICEWGISFPANWAPALGHSWRIGNDIIPDWRTIFRIINQAAPQTDVAGPGQWPDLDMLEVGNNIFSLPEEQTHFSLWAILKSPLIIGAALKDELTAINDASLAVLKQKDVIAFNQDALGKSASLRRRWTEEGYEVWSGPLSNGRTVAAVINWHNESKDLTLDLPDVGLQHAGTVKNIWDGTTARDVLTSYTATVAGHGTMLLELQNTTAVGVYPRGVFGVSSGQTTTFQNIYAVTTSAKYIISVYFSQPASSTETITIGSNANQSMISAQVPASSTLVSAEIPLTAGSSNTITINTSIPIDAIHVTPPNGTYYPCTNFTLAGSTTLTTCGSGYCQPVGSKVGYISPSGTAKATISATTSGSKYLEIDWINNDIAFDSSWGWGSNSRNLTVTVNSEDPVRIEVPLSGRHSELFGPGLGWWDTSTLGLLTSGWKEGLNEVVVGNVGGDEGFQSYGADFVGIRVLD</sequence>
<comment type="function">
    <text evidence="1">Hydrolyzes a variety of simple alpha-D-galactoside as well as more complex molecules such as oligosaccharides and polysaccharides.</text>
</comment>
<comment type="catalytic activity">
    <reaction>
        <text>Hydrolysis of terminal, non-reducing alpha-D-galactose residues in alpha-D-galactosides, including galactose oligosaccharides, galactomannans and galactolipids.</text>
        <dbReference type="EC" id="3.2.1.22"/>
    </reaction>
</comment>
<comment type="subcellular location">
    <subcellularLocation>
        <location evidence="1">Secreted</location>
    </subcellularLocation>
</comment>
<comment type="similarity">
    <text evidence="3">Belongs to the glycosyl hydrolase 27 family.</text>
</comment>
<comment type="sequence caution" evidence="3">
    <conflict type="erroneous gene model prediction">
        <sequence resource="EMBL-CDS" id="CAK46492"/>
    </conflict>
</comment>
<keyword id="KW-0119">Carbohydrate metabolism</keyword>
<keyword id="KW-1015">Disulfide bond</keyword>
<keyword id="KW-0325">Glycoprotein</keyword>
<keyword id="KW-0326">Glycosidase</keyword>
<keyword id="KW-0378">Hydrolase</keyword>
<keyword id="KW-0624">Polysaccharide degradation</keyword>
<keyword id="KW-1185">Reference proteome</keyword>
<keyword id="KW-0964">Secreted</keyword>
<keyword id="KW-0732">Signal</keyword>
<name>AGALD_ASPNC</name>
<protein>
    <recommendedName>
        <fullName>Probable alpha-galactosidase D</fullName>
        <ecNumber>3.2.1.22</ecNumber>
    </recommendedName>
    <alternativeName>
        <fullName>Melibiase D</fullName>
    </alternativeName>
</protein>
<accession>A2R2S6</accession>
<dbReference type="EC" id="3.2.1.22"/>
<dbReference type="EMBL" id="AM270315">
    <property type="protein sequence ID" value="CAK46492.1"/>
    <property type="status" value="ALT_SEQ"/>
    <property type="molecule type" value="Genomic_DNA"/>
</dbReference>
<dbReference type="RefSeq" id="XP_001400806.2">
    <property type="nucleotide sequence ID" value="XM_001400769.2"/>
</dbReference>
<dbReference type="SMR" id="A2R2S6"/>
<dbReference type="CAZy" id="GH27">
    <property type="family name" value="Glycoside Hydrolase Family 27"/>
</dbReference>
<dbReference type="GlyCosmos" id="A2R2S6">
    <property type="glycosylation" value="12 sites, No reported glycans"/>
</dbReference>
<dbReference type="EnsemblFungi" id="CAK46492">
    <property type="protein sequence ID" value="CAK46492"/>
    <property type="gene ID" value="An14g01800"/>
</dbReference>
<dbReference type="GeneID" id="4987036"/>
<dbReference type="KEGG" id="ang:An14g01800"/>
<dbReference type="Proteomes" id="UP000006706">
    <property type="component" value="Chromosome 1R"/>
</dbReference>
<dbReference type="GO" id="GO:0005576">
    <property type="term" value="C:extracellular region"/>
    <property type="evidence" value="ECO:0007669"/>
    <property type="project" value="UniProtKB-SubCell"/>
</dbReference>
<dbReference type="GO" id="GO:0004557">
    <property type="term" value="F:alpha-galactosidase activity"/>
    <property type="evidence" value="ECO:0007669"/>
    <property type="project" value="UniProtKB-EC"/>
</dbReference>
<dbReference type="GO" id="GO:0000272">
    <property type="term" value="P:polysaccharide catabolic process"/>
    <property type="evidence" value="ECO:0007669"/>
    <property type="project" value="UniProtKB-KW"/>
</dbReference>
<dbReference type="CDD" id="cd04081">
    <property type="entry name" value="CBM35_galactosidase-like"/>
    <property type="match status" value="1"/>
</dbReference>
<dbReference type="CDD" id="cd14792">
    <property type="entry name" value="GH27"/>
    <property type="match status" value="1"/>
</dbReference>
<dbReference type="FunFam" id="2.60.40.1180:FF:000008">
    <property type="entry name" value="Alpha-galactosidase"/>
    <property type="match status" value="1"/>
</dbReference>
<dbReference type="FunFam" id="3.20.20.70:FF:000197">
    <property type="entry name" value="Alpha-galactosidase"/>
    <property type="match status" value="1"/>
</dbReference>
<dbReference type="Gene3D" id="3.20.20.70">
    <property type="entry name" value="Aldolase class I"/>
    <property type="match status" value="1"/>
</dbReference>
<dbReference type="Gene3D" id="2.60.40.1180">
    <property type="entry name" value="Golgi alpha-mannosidase II"/>
    <property type="match status" value="1"/>
</dbReference>
<dbReference type="InterPro" id="IPR013785">
    <property type="entry name" value="Aldolase_TIM"/>
</dbReference>
<dbReference type="InterPro" id="IPR002241">
    <property type="entry name" value="Glyco_hydro_27"/>
</dbReference>
<dbReference type="InterPro" id="IPR013780">
    <property type="entry name" value="Glyco_hydro_b"/>
</dbReference>
<dbReference type="InterPro" id="IPR017853">
    <property type="entry name" value="Glycoside_hydrolase_SF"/>
</dbReference>
<dbReference type="InterPro" id="IPR041233">
    <property type="entry name" value="Melibiase_C"/>
</dbReference>
<dbReference type="PANTHER" id="PTHR11452:SF75">
    <property type="entry name" value="ALPHA-GALACTOSIDASE MEL1"/>
    <property type="match status" value="1"/>
</dbReference>
<dbReference type="PANTHER" id="PTHR11452">
    <property type="entry name" value="ALPHA-GALACTOSIDASE/ALPHA-N-ACETYLGALACTOSAMINIDASE"/>
    <property type="match status" value="1"/>
</dbReference>
<dbReference type="Pfam" id="PF16499">
    <property type="entry name" value="Melibiase_2"/>
    <property type="match status" value="1"/>
</dbReference>
<dbReference type="Pfam" id="PF17801">
    <property type="entry name" value="Melibiase_C"/>
    <property type="match status" value="1"/>
</dbReference>
<dbReference type="PRINTS" id="PR00740">
    <property type="entry name" value="GLHYDRLASE27"/>
</dbReference>
<dbReference type="SUPFAM" id="SSF51445">
    <property type="entry name" value="(Trans)glycosidases"/>
    <property type="match status" value="1"/>
</dbReference>
<dbReference type="SUPFAM" id="SSF51011">
    <property type="entry name" value="Glycosyl hydrolase domain"/>
    <property type="match status" value="1"/>
</dbReference>